<feature type="signal peptide" evidence="2">
    <location>
        <begin position="1"/>
        <end position="17"/>
    </location>
</feature>
<feature type="chain" id="PRO_5013985954" description="Class I hydrophobin A">
    <location>
        <begin position="18"/>
        <end position="151"/>
    </location>
</feature>
<feature type="disulfide bond" evidence="1">
    <location>
        <begin position="52"/>
        <end position="125"/>
    </location>
</feature>
<feature type="disulfide bond" evidence="1">
    <location>
        <begin position="60"/>
        <end position="119"/>
    </location>
</feature>
<feature type="disulfide bond" evidence="1">
    <location>
        <begin position="61"/>
        <end position="101"/>
    </location>
</feature>
<feature type="disulfide bond" evidence="1">
    <location>
        <begin position="126"/>
        <end position="144"/>
    </location>
</feature>
<feature type="mutagenesis site" description="Reduces the affinity for cutinase cutL1." evidence="5">
    <original>H</original>
    <variation>S</variation>
    <location>
        <position position="32"/>
    </location>
</feature>
<feature type="mutagenesis site" description="Reduces the affinity for cutinase cutL1." evidence="5">
    <original>K</original>
    <variation>S</variation>
    <location>
        <position position="34"/>
    </location>
</feature>
<feature type="mutagenesis site" description="Reduces the affinity for PBSA." evidence="4">
    <original>V</original>
    <variation>S</variation>
    <location>
        <position position="73"/>
    </location>
</feature>
<feature type="mutagenesis site" description="Reduces the affinity for PBSA." evidence="4">
    <original>L</original>
    <variation>S</variation>
    <location>
        <position position="77"/>
    </location>
</feature>
<feature type="mutagenesis site" description="Reduces the affinity for PBSA." evidence="4">
    <original>L</original>
    <variation>S</variation>
    <location>
        <position position="137"/>
    </location>
</feature>
<feature type="mutagenesis site" description="Reduces the affinity for PBSA." evidence="4">
    <original>L</original>
    <variation>S</variation>
    <location>
        <position position="142"/>
    </location>
</feature>
<proteinExistence type="evidence at protein level"/>
<protein>
    <recommendedName>
        <fullName evidence="10">Class I hydrophobin A</fullName>
    </recommendedName>
    <alternativeName>
        <fullName evidence="10">RodA-like protein A</fullName>
    </alternativeName>
</protein>
<gene>
    <name evidence="10" type="primary">rolA</name>
    <name type="ORF">AO090020000588</name>
</gene>
<evidence type="ECO:0000250" key="1">
    <source>
        <dbReference type="UniProtKB" id="Q04571"/>
    </source>
</evidence>
<evidence type="ECO:0000255" key="2"/>
<evidence type="ECO:0000269" key="3">
    <source>
    </source>
</evidence>
<evidence type="ECO:0000269" key="4">
    <source>
    </source>
</evidence>
<evidence type="ECO:0000269" key="5">
    <source>
    </source>
</evidence>
<evidence type="ECO:0000269" key="6">
    <source>
    </source>
</evidence>
<evidence type="ECO:0000269" key="7">
    <source>
    </source>
</evidence>
<evidence type="ECO:0000269" key="8">
    <source>
    </source>
</evidence>
<evidence type="ECO:0000269" key="9">
    <source>
    </source>
</evidence>
<evidence type="ECO:0000303" key="10">
    <source>
    </source>
</evidence>
<evidence type="ECO:0000305" key="11"/>
<reference key="1">
    <citation type="journal article" date="2005" name="Mol. Microbiol.">
        <title>The fungal hydrophobin RolA recruits polyesterase and laterally moves on hydrophobic surfaces.</title>
        <authorList>
            <person name="Takahashi T."/>
            <person name="Maeda H."/>
            <person name="Yoneda S."/>
            <person name="Ohtaki S."/>
            <person name="Yamagata Y."/>
            <person name="Hasegawa F."/>
            <person name="Gomi K."/>
            <person name="Nakajima T."/>
            <person name="Abe K."/>
        </authorList>
    </citation>
    <scope>NUCLEOTIDE SEQUENCE [GENOMIC DNA]</scope>
    <scope>FUNCTION</scope>
    <scope>INDUCTION</scope>
    <scope>SUBCELLULAR LOCATION</scope>
    <scope>INTERACTION WITH CUTL1</scope>
    <source>
        <strain>ATCC 42149 / RIB 40</strain>
    </source>
</reference>
<reference key="2">
    <citation type="submission" date="2002-12" db="EMBL/GenBank/DDBJ databases">
        <title>Analysis of the cell surface localization process of hydrophobin A (HypA) in Aspergillus oryzae.</title>
        <authorList>
            <person name="Iwasaki T."/>
            <person name="Escano C.S."/>
            <person name="Maruyama J."/>
            <person name="Nakajima H."/>
            <person name="Kitamoto K."/>
        </authorList>
    </citation>
    <scope>NUCLEOTIDE SEQUENCE [GENOMIC DNA]</scope>
</reference>
<reference key="3">
    <citation type="journal article" date="2005" name="Nature">
        <title>Genome sequencing and analysis of Aspergillus oryzae.</title>
        <authorList>
            <person name="Machida M."/>
            <person name="Asai K."/>
            <person name="Sano M."/>
            <person name="Tanaka T."/>
            <person name="Kumagai T."/>
            <person name="Terai G."/>
            <person name="Kusumoto K."/>
            <person name="Arima T."/>
            <person name="Akita O."/>
            <person name="Kashiwagi Y."/>
            <person name="Abe K."/>
            <person name="Gomi K."/>
            <person name="Horiuchi H."/>
            <person name="Kitamoto K."/>
            <person name="Kobayashi T."/>
            <person name="Takeuchi M."/>
            <person name="Denning D.W."/>
            <person name="Galagan J.E."/>
            <person name="Nierman W.C."/>
            <person name="Yu J."/>
            <person name="Archer D.B."/>
            <person name="Bennett J.W."/>
            <person name="Bhatnagar D."/>
            <person name="Cleveland T.E."/>
            <person name="Fedorova N.D."/>
            <person name="Gotoh O."/>
            <person name="Horikawa H."/>
            <person name="Hosoyama A."/>
            <person name="Ichinomiya M."/>
            <person name="Igarashi R."/>
            <person name="Iwashita K."/>
            <person name="Juvvadi P.R."/>
            <person name="Kato M."/>
            <person name="Kato Y."/>
            <person name="Kin T."/>
            <person name="Kokubun A."/>
            <person name="Maeda H."/>
            <person name="Maeyama N."/>
            <person name="Maruyama J."/>
            <person name="Nagasaki H."/>
            <person name="Nakajima T."/>
            <person name="Oda K."/>
            <person name="Okada K."/>
            <person name="Paulsen I."/>
            <person name="Sakamoto K."/>
            <person name="Sawano T."/>
            <person name="Takahashi M."/>
            <person name="Takase K."/>
            <person name="Terabayashi Y."/>
            <person name="Wortman J.R."/>
            <person name="Yamada O."/>
            <person name="Yamagata Y."/>
            <person name="Anazawa H."/>
            <person name="Hata Y."/>
            <person name="Koide Y."/>
            <person name="Komori T."/>
            <person name="Koyama Y."/>
            <person name="Minetoki T."/>
            <person name="Suharnan S."/>
            <person name="Tanaka A."/>
            <person name="Isono K."/>
            <person name="Kuhara S."/>
            <person name="Ogasawara N."/>
            <person name="Kikuchi H."/>
        </authorList>
    </citation>
    <scope>NUCLEOTIDE SEQUENCE [LARGE SCALE GENOMIC DNA]</scope>
    <source>
        <strain>ATCC 42149 / RIB 40</strain>
    </source>
</reference>
<reference key="4">
    <citation type="journal article" date="2014" name="Biosci. Biotechnol. Biochem.">
        <title>Involvement of hydrophobic amino acid residues in C7-C8 loop of Aspergillus oryzae hydrophobin RolA in hydrophobic interaction between RolA and a polyester.</title>
        <authorList>
            <person name="Tanaka T."/>
            <person name="Tanabe H."/>
            <person name="Uehara K."/>
            <person name="Takahashi T."/>
            <person name="Abe K."/>
        </authorList>
    </citation>
    <scope>FUNCTION</scope>
    <scope>DOMAIN</scope>
    <scope>MUTAGENESIS OF VAL-73; LEU-77; LEU-137 AND LEU-142</scope>
</reference>
<reference key="5">
    <citation type="journal article" date="2015" name="Mol. Microbiol.">
        <title>Ionic interaction of positive amino acid residues of fungal hydrophobin RolA with acidic amino acid residues of cutinase CutL1.</title>
        <authorList>
            <person name="Takahashi T."/>
            <person name="Tanaka T."/>
            <person name="Tsushima Y."/>
            <person name="Muragaki K."/>
            <person name="Uehara K."/>
            <person name="Takeuchi S."/>
            <person name="Maeda H."/>
            <person name="Yamagata Y."/>
            <person name="Nakayama M."/>
            <person name="Yoshimi A."/>
            <person name="Abe K."/>
        </authorList>
    </citation>
    <scope>FUNCTION</scope>
    <scope>INTERACTION WITH CUTL1</scope>
    <scope>MUTAGENESIS OF HIS-32 AND LYS-34</scope>
</reference>
<reference key="6">
    <citation type="journal article" date="2020" name="Biosci. Biotechnol. Biochem.">
        <title>Analysis of the self-assembly process of Aspergillus oryzae hydrophobin RolA by Langmuir-Blodgett method.</title>
        <authorList>
            <person name="Terauchi Y."/>
            <person name="Tanaka T."/>
            <person name="Mitsuishi M."/>
            <person name="Yabu H."/>
            <person name="Yoshimi A."/>
            <person name="Nantani K."/>
            <person name="Abe K."/>
        </authorList>
    </citation>
    <scope>SUBUNIT</scope>
</reference>
<reference key="7">
    <citation type="journal article" date="2021" name="Appl. Biochem. Biotechnol.">
        <title>Fungal Hydrophobin RolA Enhanced PETase Hydrolysis of Polyethylene Terephthalate.</title>
        <authorList>
            <person name="Puspitasari N."/>
            <person name="Tsai S.L."/>
            <person name="Lee C.K."/>
        </authorList>
    </citation>
    <scope>FUNCTION</scope>
    <scope>BIOTECHNOLOGY</scope>
</reference>
<reference key="8">
    <citation type="journal article" date="2022" name="Appl. Environ. Microbiol.">
        <title>Adsorption Kinetics and Self-Assembled Structures of Aspergillus oryzae Hydrophobin RolA on Hydrophobic and Charged Solid Surfaces.</title>
        <authorList>
            <person name="Terauchi Y."/>
            <person name="Nagayama M."/>
            <person name="Tanaka T."/>
            <person name="Tanabe H."/>
            <person name="Yoshimi A."/>
            <person name="Nanatani K."/>
            <person name="Yabu H."/>
            <person name="Arita T."/>
            <person name="Higuchi T."/>
            <person name="Kameda T."/>
            <person name="Abe K."/>
        </authorList>
    </citation>
    <scope>SUBUNIT</scope>
</reference>
<reference key="9">
    <citation type="journal article" date="2023" name="Biosci. Biotechnol. Biochem.">
        <title>Involvement of ionic interactions in self-assembly and resultant rodlet formation of class I hydrophobin RolA from Aspergillus oryzae.</title>
        <authorList>
            <person name="Takahashi N."/>
            <person name="Terauchi Y."/>
            <person name="Tanaka T."/>
            <person name="Yoshimi A."/>
            <person name="Yabu H."/>
            <person name="Abe K."/>
        </authorList>
    </citation>
    <scope>SUBUNIT</scope>
</reference>
<name>ROLA_ASPOR</name>
<dbReference type="EMBL" id="AB094496">
    <property type="protein sequence ID" value="BAC65230.1"/>
    <property type="molecule type" value="Genomic_DNA"/>
</dbReference>
<dbReference type="EMBL" id="AB097447">
    <property type="protein sequence ID" value="BAC77247.1"/>
    <property type="molecule type" value="Genomic_DNA"/>
</dbReference>
<dbReference type="EMBL" id="AP007167">
    <property type="protein sequence ID" value="BAE63748.1"/>
    <property type="molecule type" value="Genomic_DNA"/>
</dbReference>
<dbReference type="RefSeq" id="XP_001824881.1">
    <property type="nucleotide sequence ID" value="XM_001824829.3"/>
</dbReference>
<dbReference type="SMR" id="Q2U3W7"/>
<dbReference type="STRING" id="510516.Q2U3W7"/>
<dbReference type="EnsemblFungi" id="BAE63748">
    <property type="protein sequence ID" value="BAE63748"/>
    <property type="gene ID" value="AO090020000588"/>
</dbReference>
<dbReference type="GeneID" id="5996967"/>
<dbReference type="KEGG" id="aor:AO090020000588"/>
<dbReference type="VEuPathDB" id="FungiDB:AO090020000588"/>
<dbReference type="HOGENOM" id="CLU_106380_1_0_1"/>
<dbReference type="OMA" id="DNMTVKQ"/>
<dbReference type="OrthoDB" id="128773at5052"/>
<dbReference type="Proteomes" id="UP000006564">
    <property type="component" value="Chromosome 6"/>
</dbReference>
<dbReference type="GO" id="GO:0005576">
    <property type="term" value="C:extracellular region"/>
    <property type="evidence" value="ECO:0007669"/>
    <property type="project" value="UniProtKB-KW"/>
</dbReference>
<dbReference type="GO" id="GO:0009277">
    <property type="term" value="C:fungal-type cell wall"/>
    <property type="evidence" value="ECO:0007669"/>
    <property type="project" value="InterPro"/>
</dbReference>
<dbReference type="GO" id="GO:0005199">
    <property type="term" value="F:structural constituent of cell wall"/>
    <property type="evidence" value="ECO:0007669"/>
    <property type="project" value="InterPro"/>
</dbReference>
<dbReference type="InterPro" id="IPR001338">
    <property type="entry name" value="Hydrophobin"/>
</dbReference>
<dbReference type="Pfam" id="PF01185">
    <property type="entry name" value="Hydrophobin"/>
    <property type="match status" value="1"/>
</dbReference>
<dbReference type="SMART" id="SM00075">
    <property type="entry name" value="HYDRO"/>
    <property type="match status" value="1"/>
</dbReference>
<accession>Q2U3W7</accession>
<accession>Q873N6</accession>
<organism>
    <name type="scientific">Aspergillus oryzae (strain ATCC 42149 / RIB 40)</name>
    <name type="common">Yellow koji mold</name>
    <dbReference type="NCBI Taxonomy" id="510516"/>
    <lineage>
        <taxon>Eukaryota</taxon>
        <taxon>Fungi</taxon>
        <taxon>Dikarya</taxon>
        <taxon>Ascomycota</taxon>
        <taxon>Pezizomycotina</taxon>
        <taxon>Eurotiomycetes</taxon>
        <taxon>Eurotiomycetidae</taxon>
        <taxon>Eurotiales</taxon>
        <taxon>Aspergillaceae</taxon>
        <taxon>Aspergillus</taxon>
        <taxon>Aspergillus subgen. Circumdati</taxon>
    </lineage>
</organism>
<comment type="function">
    <text evidence="3 4 7 11">Aerial growth, conidiation, and dispersal of filamentous fungi in the environment rely upon a capability of their secreting small amphipathic proteins called hydrophobins (HPBs) with low sequence identity. Class I can self-assemble into an outermost layer of rodlet bundles on aerial cell surfaces, conferring cellular hydrophobicity that supports fungal growth, development and dispersal; whereas Class II form highly ordered films at water-air interfaces through intermolecular interactions but contribute nothing to the rodlet structure (Probable). RolA is a class I hydrophobin that undergoes a conformational change after its adsorption to hydrophobic surfaces such as the biodegradable polyester polybutylene succinate-coadipate (PBSA) and recruits the cutinase cutL1, resulting in condensation of cutL1 on the PBSA surface and consequent stimulation of PBSA hydrolysis (PubMed:16135240, PubMed:25273133). Increases also the activity of polyethylene terephthalate hydrolase (PETase) that hydrolyzes polyethylene terephthalate (PET), one of the most well-known polyesters that is widely used as packaging material, when the PET samples are preincubated with the hydrophobin. The wetting effect of rolA probably acts on PET surface to become hydrophilic, which leads PETase easier to contact and attack the surface (PubMed:32506284).</text>
</comment>
<comment type="subunit">
    <text evidence="3 5 6 8 9">Interacts with cutinase cutL1 in a pH-dependent manner (PubMed:16135240, PubMed:25588312). Self-assembles to form functional amyloid fibrils called rodlets. Self-assembly into fibrillar rodlets occurs spontaneously at hydrophobic:hydrophilic interfaces and the rodlets further associate laterally to form amphipathic monolayers (PubMed:31876261, PubMed:35108098, PubMed:37253619). rolA rodlet formation is regulated by the strength of ionic interactions between rolA molecules (PubMed:37253619). Three types of self-assembled structures of rolA are observed: spherical, rod-like, and mesh-like (PubMed:35108098).</text>
</comment>
<comment type="subcellular location">
    <subcellularLocation>
        <location evidence="3">Secreted</location>
    </subcellularLocation>
    <subcellularLocation>
        <location evidence="3">Secreted</location>
        <location evidence="3">Cell wall</location>
    </subcellularLocation>
</comment>
<comment type="induction">
    <text evidence="3">Expression is highly induced by the biodegradable polyester polybutylene succinate-coadipate (PBSA).</text>
</comment>
<comment type="domain">
    <text evidence="4">The Cys3-Cys4 (residues 61 to 101) and Cys7-Cys8 (residues 126 to 144) loops form hydrophobic segments involved in adsorption of hydrophobins on hydrophobic surfaces.</text>
</comment>
<comment type="biotechnology">
    <text evidence="7">RolA enhances the polyethylene terephthalate (PET) hydrolysis in the presence of the recombinant polyethylene terephthalate hydrolase (PETase) and the PETase-hydrophobin interaction has a high potential to increase the rate of PET recycling.</text>
</comment>
<comment type="similarity">
    <text evidence="11">Belongs to the fungal hydrophobin family.</text>
</comment>
<sequence length="151" mass="15249">MQFSVAAVLALATAVAALPPASGTGAGQQVGHSKNDFPLPKELTTKQAADKCGDQAQLTCCNKTVKTGDFTQVEEGLLAGLLSNLLGAGQGSQGLGLLDECTNIPVIPIISIASPQEKCKQPISCCQNTKSSADGDLVGIGLPCIALGSLL</sequence>
<keyword id="KW-0134">Cell wall</keyword>
<keyword id="KW-1015">Disulfide bond</keyword>
<keyword id="KW-1185">Reference proteome</keyword>
<keyword id="KW-0964">Secreted</keyword>
<keyword id="KW-0732">Signal</keyword>